<dbReference type="EMBL" id="CP001129">
    <property type="protein sequence ID" value="ACG63159.1"/>
    <property type="molecule type" value="Genomic_DNA"/>
</dbReference>
<dbReference type="RefSeq" id="WP_012516409.1">
    <property type="nucleotide sequence ID" value="NC_011134.1"/>
</dbReference>
<dbReference type="SMR" id="B4U0F0"/>
<dbReference type="KEGG" id="sez:Sez_1832"/>
<dbReference type="HOGENOM" id="CLU_054493_1_0_9"/>
<dbReference type="Proteomes" id="UP000001873">
    <property type="component" value="Chromosome"/>
</dbReference>
<dbReference type="GO" id="GO:0005737">
    <property type="term" value="C:cytoplasm"/>
    <property type="evidence" value="ECO:0007669"/>
    <property type="project" value="UniProtKB-SubCell"/>
</dbReference>
<dbReference type="GO" id="GO:0044183">
    <property type="term" value="F:protein folding chaperone"/>
    <property type="evidence" value="ECO:0007669"/>
    <property type="project" value="TreeGrafter"/>
</dbReference>
<dbReference type="GO" id="GO:0051082">
    <property type="term" value="F:unfolded protein binding"/>
    <property type="evidence" value="ECO:0007669"/>
    <property type="project" value="UniProtKB-UniRule"/>
</dbReference>
<dbReference type="GO" id="GO:0042026">
    <property type="term" value="P:protein refolding"/>
    <property type="evidence" value="ECO:0007669"/>
    <property type="project" value="TreeGrafter"/>
</dbReference>
<dbReference type="CDD" id="cd00498">
    <property type="entry name" value="Hsp33"/>
    <property type="match status" value="1"/>
</dbReference>
<dbReference type="Gene3D" id="3.55.30.10">
    <property type="entry name" value="Hsp33 domain"/>
    <property type="match status" value="1"/>
</dbReference>
<dbReference type="Gene3D" id="3.90.1280.10">
    <property type="entry name" value="HSP33 redox switch-like"/>
    <property type="match status" value="1"/>
</dbReference>
<dbReference type="HAMAP" id="MF_00117">
    <property type="entry name" value="HslO"/>
    <property type="match status" value="1"/>
</dbReference>
<dbReference type="InterPro" id="IPR000397">
    <property type="entry name" value="Heat_shock_Hsp33"/>
</dbReference>
<dbReference type="InterPro" id="IPR016154">
    <property type="entry name" value="Heat_shock_Hsp33_C"/>
</dbReference>
<dbReference type="InterPro" id="IPR016153">
    <property type="entry name" value="Heat_shock_Hsp33_N"/>
</dbReference>
<dbReference type="NCBIfam" id="NF001033">
    <property type="entry name" value="PRK00114.1"/>
    <property type="match status" value="1"/>
</dbReference>
<dbReference type="PANTHER" id="PTHR30111">
    <property type="entry name" value="33 KDA CHAPERONIN"/>
    <property type="match status" value="1"/>
</dbReference>
<dbReference type="PANTHER" id="PTHR30111:SF1">
    <property type="entry name" value="33 KDA CHAPERONIN"/>
    <property type="match status" value="1"/>
</dbReference>
<dbReference type="Pfam" id="PF01430">
    <property type="entry name" value="HSP33"/>
    <property type="match status" value="1"/>
</dbReference>
<dbReference type="PIRSF" id="PIRSF005261">
    <property type="entry name" value="Heat_shock_Hsp33"/>
    <property type="match status" value="1"/>
</dbReference>
<dbReference type="SUPFAM" id="SSF64397">
    <property type="entry name" value="Hsp33 domain"/>
    <property type="match status" value="1"/>
</dbReference>
<dbReference type="SUPFAM" id="SSF118352">
    <property type="entry name" value="HSP33 redox switch-like"/>
    <property type="match status" value="1"/>
</dbReference>
<reference key="1">
    <citation type="journal article" date="2008" name="PLoS ONE">
        <title>Genome sequence of a lancefield group C Streptococcus zooepidemicus strain causing epidemic nephritis: new information about an old disease.</title>
        <authorList>
            <person name="Beres S.B."/>
            <person name="Sesso R."/>
            <person name="Pinto S.W.L."/>
            <person name="Hoe N.P."/>
            <person name="Porcella S.F."/>
            <person name="Deleo F.R."/>
            <person name="Musser J.M."/>
        </authorList>
    </citation>
    <scope>NUCLEOTIDE SEQUENCE [LARGE SCALE GENOMIC DNA]</scope>
    <source>
        <strain>MGCS10565</strain>
    </source>
</reference>
<sequence>MDKLIKTISVSGAFRAYVLDCTETVRAAQERHHTLSSSTVALGRTLIANQILAANQKGDSKVTVKVIGDSSFGHIISVADTKGHVKGYIQNPGVDIKKTATGEVLVGPFMGQGHFVTITDYGTGNPYTSTTPLITGEIGEDLAYYLTESEQTPSAVGLNVLLDQEDKVKVAGGFMLQVLPEASDEEISRYEKRIQEMPAISSLLASENHIDALLAAIYGKEPYKRLAEEQLSFQCDCSRERFASALMSLPKADLLTMLNEDKGAEIVCQFCGTKYQFDQADLEVLINDKT</sequence>
<protein>
    <recommendedName>
        <fullName evidence="1">33 kDa chaperonin</fullName>
    </recommendedName>
    <alternativeName>
        <fullName evidence="1">Heat shock protein 33 homolog</fullName>
        <shortName evidence="1">HSP33</shortName>
    </alternativeName>
</protein>
<feature type="chain" id="PRO_1000095031" description="33 kDa chaperonin">
    <location>
        <begin position="1"/>
        <end position="290"/>
    </location>
</feature>
<feature type="disulfide bond" description="Redox-active" evidence="1">
    <location>
        <begin position="235"/>
        <end position="237"/>
    </location>
</feature>
<feature type="disulfide bond" description="Redox-active" evidence="1">
    <location>
        <begin position="268"/>
        <end position="271"/>
    </location>
</feature>
<name>HSLO_STREM</name>
<proteinExistence type="inferred from homology"/>
<gene>
    <name evidence="1" type="primary">hslO</name>
    <name type="ordered locus">Sez_1832</name>
</gene>
<organism>
    <name type="scientific">Streptococcus equi subsp. zooepidemicus (strain MGCS10565)</name>
    <dbReference type="NCBI Taxonomy" id="552526"/>
    <lineage>
        <taxon>Bacteria</taxon>
        <taxon>Bacillati</taxon>
        <taxon>Bacillota</taxon>
        <taxon>Bacilli</taxon>
        <taxon>Lactobacillales</taxon>
        <taxon>Streptococcaceae</taxon>
        <taxon>Streptococcus</taxon>
    </lineage>
</organism>
<comment type="function">
    <text evidence="1">Redox regulated molecular chaperone. Protects both thermally unfolding and oxidatively damaged proteins from irreversible aggregation. Plays an important role in the bacterial defense system toward oxidative stress.</text>
</comment>
<comment type="subcellular location">
    <subcellularLocation>
        <location evidence="1">Cytoplasm</location>
    </subcellularLocation>
</comment>
<comment type="PTM">
    <text evidence="1">Under oxidizing conditions two disulfide bonds are formed involving the reactive cysteines. Under reducing conditions zinc is bound to the reactive cysteines and the protein is inactive.</text>
</comment>
<comment type="similarity">
    <text evidence="1">Belongs to the HSP33 family.</text>
</comment>
<accession>B4U0F0</accession>
<evidence type="ECO:0000255" key="1">
    <source>
        <dbReference type="HAMAP-Rule" id="MF_00117"/>
    </source>
</evidence>
<keyword id="KW-0143">Chaperone</keyword>
<keyword id="KW-0963">Cytoplasm</keyword>
<keyword id="KW-1015">Disulfide bond</keyword>
<keyword id="KW-0676">Redox-active center</keyword>
<keyword id="KW-0346">Stress response</keyword>
<keyword id="KW-0862">Zinc</keyword>